<sequence>MTPAGDTPERGSGDRAVAEAAERAKATGARNIPVFDDLPLPADTANLRDGVSLSDSLLALLPLVGVWRGEGEGRDADGDYRFGQQIVVSHDGGDYLNWEARSWRLDESGEYHSPALRETGYWRFVTDPADPHETQAIELLLAHSSGYIELFYGRPLNQSSWELVTDALARSKSGTLVGGAKRLYGIVEGGDLGYVEERVDADGGLVPHLSARLSRYVG</sequence>
<proteinExistence type="inferred from homology"/>
<dbReference type="EC" id="5.99.-.-" evidence="1"/>
<dbReference type="EMBL" id="CP000480">
    <property type="protein sequence ID" value="ABK69964.1"/>
    <property type="molecule type" value="Genomic_DNA"/>
</dbReference>
<dbReference type="EMBL" id="CP001663">
    <property type="protein sequence ID" value="AFP42074.1"/>
    <property type="molecule type" value="Genomic_DNA"/>
</dbReference>
<dbReference type="RefSeq" id="WP_011730793.1">
    <property type="nucleotide sequence ID" value="NZ_SIJM01000007.1"/>
</dbReference>
<dbReference type="RefSeq" id="YP_890020.1">
    <property type="nucleotide sequence ID" value="NC_008596.1"/>
</dbReference>
<dbReference type="SMR" id="A0R4D2"/>
<dbReference type="STRING" id="246196.MSMEG_5792"/>
<dbReference type="PaxDb" id="246196-MSMEI_5639"/>
<dbReference type="KEGG" id="msb:LJ00_28640"/>
<dbReference type="KEGG" id="msg:MSMEI_5639"/>
<dbReference type="KEGG" id="msm:MSMEG_5792"/>
<dbReference type="PATRIC" id="fig|246196.19.peg.5636"/>
<dbReference type="eggNOG" id="COG4044">
    <property type="taxonomic scope" value="Bacteria"/>
</dbReference>
<dbReference type="OrthoDB" id="4804006at2"/>
<dbReference type="Proteomes" id="UP000000757">
    <property type="component" value="Chromosome"/>
</dbReference>
<dbReference type="Proteomes" id="UP000006158">
    <property type="component" value="Chromosome"/>
</dbReference>
<dbReference type="GO" id="GO:0020037">
    <property type="term" value="F:heme binding"/>
    <property type="evidence" value="ECO:0007669"/>
    <property type="project" value="UniProtKB-UniRule"/>
</dbReference>
<dbReference type="GO" id="GO:0046872">
    <property type="term" value="F:metal ion binding"/>
    <property type="evidence" value="ECO:0007669"/>
    <property type="project" value="UniProtKB-KW"/>
</dbReference>
<dbReference type="GO" id="GO:0062213">
    <property type="term" value="F:peroxynitrite isomerase activity"/>
    <property type="evidence" value="ECO:0007669"/>
    <property type="project" value="UniProtKB-UniRule"/>
</dbReference>
<dbReference type="CDD" id="cd07828">
    <property type="entry name" value="lipocalin_heme-bd-THAP4-like"/>
    <property type="match status" value="1"/>
</dbReference>
<dbReference type="Gene3D" id="2.40.128.20">
    <property type="match status" value="1"/>
</dbReference>
<dbReference type="HAMAP" id="MF_01297">
    <property type="entry name" value="nitrobindin"/>
    <property type="match status" value="1"/>
</dbReference>
<dbReference type="InterPro" id="IPR012674">
    <property type="entry name" value="Calycin"/>
</dbReference>
<dbReference type="InterPro" id="IPR022939">
    <property type="entry name" value="Nb(III)_bact/plant"/>
</dbReference>
<dbReference type="InterPro" id="IPR045165">
    <property type="entry name" value="Nitrobindin"/>
</dbReference>
<dbReference type="InterPro" id="IPR014878">
    <property type="entry name" value="THAP4-like_heme-bd"/>
</dbReference>
<dbReference type="PANTHER" id="PTHR15854:SF4">
    <property type="entry name" value="PEROXYNITRITE ISOMERASE THAP4"/>
    <property type="match status" value="1"/>
</dbReference>
<dbReference type="PANTHER" id="PTHR15854">
    <property type="entry name" value="THAP4 PROTEIN"/>
    <property type="match status" value="1"/>
</dbReference>
<dbReference type="Pfam" id="PF08768">
    <property type="entry name" value="THAP4_heme-bd"/>
    <property type="match status" value="1"/>
</dbReference>
<dbReference type="SUPFAM" id="SSF50814">
    <property type="entry name" value="Lipocalins"/>
    <property type="match status" value="1"/>
</dbReference>
<reference key="1">
    <citation type="submission" date="2006-10" db="EMBL/GenBank/DDBJ databases">
        <authorList>
            <person name="Fleischmann R.D."/>
            <person name="Dodson R.J."/>
            <person name="Haft D.H."/>
            <person name="Merkel J.S."/>
            <person name="Nelson W.C."/>
            <person name="Fraser C.M."/>
        </authorList>
    </citation>
    <scope>NUCLEOTIDE SEQUENCE [LARGE SCALE GENOMIC DNA]</scope>
    <source>
        <strain>ATCC 700084 / mc(2)155</strain>
    </source>
</reference>
<reference key="2">
    <citation type="journal article" date="2007" name="Genome Biol.">
        <title>Interrupted coding sequences in Mycobacterium smegmatis: authentic mutations or sequencing errors?</title>
        <authorList>
            <person name="Deshayes C."/>
            <person name="Perrodou E."/>
            <person name="Gallien S."/>
            <person name="Euphrasie D."/>
            <person name="Schaeffer C."/>
            <person name="Van-Dorsselaer A."/>
            <person name="Poch O."/>
            <person name="Lecompte O."/>
            <person name="Reyrat J.-M."/>
        </authorList>
    </citation>
    <scope>NUCLEOTIDE SEQUENCE [LARGE SCALE GENOMIC DNA]</scope>
    <source>
        <strain>ATCC 700084 / mc(2)155</strain>
    </source>
</reference>
<reference key="3">
    <citation type="journal article" date="2009" name="Genome Res.">
        <title>Ortho-proteogenomics: multiple proteomes investigation through orthology and a new MS-based protocol.</title>
        <authorList>
            <person name="Gallien S."/>
            <person name="Perrodou E."/>
            <person name="Carapito C."/>
            <person name="Deshayes C."/>
            <person name="Reyrat J.-M."/>
            <person name="Van Dorsselaer A."/>
            <person name="Poch O."/>
            <person name="Schaeffer C."/>
            <person name="Lecompte O."/>
        </authorList>
    </citation>
    <scope>NUCLEOTIDE SEQUENCE [LARGE SCALE GENOMIC DNA]</scope>
    <source>
        <strain>ATCC 700084 / mc(2)155</strain>
    </source>
</reference>
<gene>
    <name type="ordered locus">MSMEG_5792</name>
    <name type="ordered locus">MSMEI_5639</name>
</gene>
<name>NB2_MYCS2</name>
<protein>
    <recommendedName>
        <fullName>Peroxynitrite isomerase 2</fullName>
        <ecNumber evidence="1">5.99.-.-</ecNumber>
    </recommendedName>
    <alternativeName>
        <fullName>Ferric nitrobindin</fullName>
        <shortName>Nb(III)</shortName>
    </alternativeName>
</protein>
<keyword id="KW-0349">Heme</keyword>
<keyword id="KW-0408">Iron</keyword>
<keyword id="KW-0413">Isomerase</keyword>
<keyword id="KW-0479">Metal-binding</keyword>
<keyword id="KW-1185">Reference proteome</keyword>
<organism>
    <name type="scientific">Mycolicibacterium smegmatis (strain ATCC 700084 / mc(2)155)</name>
    <name type="common">Mycobacterium smegmatis</name>
    <dbReference type="NCBI Taxonomy" id="246196"/>
    <lineage>
        <taxon>Bacteria</taxon>
        <taxon>Bacillati</taxon>
        <taxon>Actinomycetota</taxon>
        <taxon>Actinomycetes</taxon>
        <taxon>Mycobacteriales</taxon>
        <taxon>Mycobacteriaceae</taxon>
        <taxon>Mycolicibacterium</taxon>
    </lineage>
</organism>
<evidence type="ECO:0000255" key="1">
    <source>
        <dbReference type="HAMAP-Rule" id="MF_01297"/>
    </source>
</evidence>
<evidence type="ECO:0000256" key="2">
    <source>
        <dbReference type="SAM" id="MobiDB-lite"/>
    </source>
</evidence>
<comment type="function">
    <text evidence="1">Heme-binding protein able to scavenge peroxynitrite and to protect free L-tyrosine against peroxynitrite-mediated nitration, by acting as a peroxynitrite isomerase that converts peroxynitrite to nitrate. Therefore, this protein likely plays a role in peroxynitrite sensing and in the detoxification of reactive nitrogen and oxygen species (RNS and ROS, respectively). Is able to bind nitric oxide (NO) in vitro, but may act as a sensor of peroxynitrite levels in vivo.</text>
</comment>
<comment type="catalytic activity">
    <reaction evidence="1">
        <text>peroxynitrite = nitrate</text>
        <dbReference type="Rhea" id="RHEA:63116"/>
        <dbReference type="ChEBI" id="CHEBI:17632"/>
        <dbReference type="ChEBI" id="CHEBI:25941"/>
    </reaction>
    <physiologicalReaction direction="left-to-right" evidence="1">
        <dbReference type="Rhea" id="RHEA:63117"/>
    </physiologicalReaction>
</comment>
<comment type="cofactor">
    <cofactor evidence="1">
        <name>heme b</name>
        <dbReference type="ChEBI" id="CHEBI:60344"/>
    </cofactor>
    <text evidence="1">Binds 1 heme b group per subunit, that coordinates a highly solvent-exposed Fe(III) atom.</text>
</comment>
<comment type="pathway">
    <text evidence="1">Nitrogen metabolism.</text>
</comment>
<comment type="subunit">
    <text evidence="1">Homodimer.</text>
</comment>
<comment type="domain">
    <text evidence="1">Forms a 10-stranded antiparallel beta-barrel structure able to accommodate a hydrophobic ligand in its interior. In fact, this fold hosts the heme group, which is located in a wide surface cleft.</text>
</comment>
<comment type="similarity">
    <text evidence="1">Belongs to the nitrobindin family.</text>
</comment>
<accession>A0R4D2</accession>
<accession>I7GFR1</accession>
<feature type="chain" id="PRO_0000356926" description="Peroxynitrite isomerase 2">
    <location>
        <begin position="1"/>
        <end position="218"/>
    </location>
</feature>
<feature type="region of interest" description="Disordered" evidence="2">
    <location>
        <begin position="1"/>
        <end position="24"/>
    </location>
</feature>
<feature type="short sequence motif" description="GXWXGXG" evidence="1">
    <location>
        <begin position="65"/>
        <end position="71"/>
    </location>
</feature>
<feature type="compositionally biased region" description="Basic and acidic residues" evidence="2">
    <location>
        <begin position="7"/>
        <end position="24"/>
    </location>
</feature>
<feature type="binding site" evidence="1">
    <location>
        <position position="181"/>
    </location>
    <ligand>
        <name>heme b</name>
        <dbReference type="ChEBI" id="CHEBI:60344"/>
    </ligand>
</feature>
<feature type="binding site" description="axial binding residue" evidence="1">
    <location>
        <position position="208"/>
    </location>
    <ligand>
        <name>heme b</name>
        <dbReference type="ChEBI" id="CHEBI:60344"/>
    </ligand>
    <ligandPart>
        <name>Fe</name>
        <dbReference type="ChEBI" id="CHEBI:18248"/>
    </ligandPart>
</feature>